<reference key="1">
    <citation type="journal article" date="2008" name="Genome Biol.">
        <title>The complete genome, comparative and functional analysis of Stenotrophomonas maltophilia reveals an organism heavily shielded by drug resistance determinants.</title>
        <authorList>
            <person name="Crossman L.C."/>
            <person name="Gould V.C."/>
            <person name="Dow J.M."/>
            <person name="Vernikos G.S."/>
            <person name="Okazaki A."/>
            <person name="Sebaihia M."/>
            <person name="Saunders D."/>
            <person name="Arrowsmith C."/>
            <person name="Carver T."/>
            <person name="Peters N."/>
            <person name="Adlem E."/>
            <person name="Kerhornou A."/>
            <person name="Lord A."/>
            <person name="Murphy L."/>
            <person name="Seeger K."/>
            <person name="Squares R."/>
            <person name="Rutter S."/>
            <person name="Quail M.A."/>
            <person name="Rajandream M.A."/>
            <person name="Harris D."/>
            <person name="Churcher C."/>
            <person name="Bentley S.D."/>
            <person name="Parkhill J."/>
            <person name="Thomson N.R."/>
            <person name="Avison M.B."/>
        </authorList>
    </citation>
    <scope>NUCLEOTIDE SEQUENCE [LARGE SCALE GENOMIC DNA]</scope>
    <source>
        <strain>K279a</strain>
    </source>
</reference>
<evidence type="ECO:0000255" key="1">
    <source>
        <dbReference type="HAMAP-Rule" id="MF_00185"/>
    </source>
</evidence>
<protein>
    <recommendedName>
        <fullName evidence="1">tRNA dimethylallyltransferase</fullName>
        <ecNumber evidence="1">2.5.1.75</ecNumber>
    </recommendedName>
    <alternativeName>
        <fullName evidence="1">Dimethylallyl diphosphate:tRNA dimethylallyltransferase</fullName>
        <shortName evidence="1">DMAPP:tRNA dimethylallyltransferase</shortName>
        <shortName evidence="1">DMATase</shortName>
    </alternativeName>
    <alternativeName>
        <fullName evidence="1">Isopentenyl-diphosphate:tRNA isopentenyltransferase</fullName>
        <shortName evidence="1">IPP transferase</shortName>
        <shortName evidence="1">IPPT</shortName>
        <shortName evidence="1">IPTase</shortName>
    </alternativeName>
</protein>
<organism>
    <name type="scientific">Stenotrophomonas maltophilia (strain K279a)</name>
    <dbReference type="NCBI Taxonomy" id="522373"/>
    <lineage>
        <taxon>Bacteria</taxon>
        <taxon>Pseudomonadati</taxon>
        <taxon>Pseudomonadota</taxon>
        <taxon>Gammaproteobacteria</taxon>
        <taxon>Lysobacterales</taxon>
        <taxon>Lysobacteraceae</taxon>
        <taxon>Stenotrophomonas</taxon>
        <taxon>Stenotrophomonas maltophilia group</taxon>
    </lineage>
</organism>
<dbReference type="EC" id="2.5.1.75" evidence="1"/>
<dbReference type="EMBL" id="AM743169">
    <property type="protein sequence ID" value="CAQ45258.1"/>
    <property type="molecule type" value="Genomic_DNA"/>
</dbReference>
<dbReference type="RefSeq" id="WP_012479733.1">
    <property type="nucleotide sequence ID" value="NC_010943.1"/>
</dbReference>
<dbReference type="SMR" id="B2FL25"/>
<dbReference type="EnsemblBacteria" id="CAQ45258">
    <property type="protein sequence ID" value="CAQ45258"/>
    <property type="gene ID" value="Smlt1735"/>
</dbReference>
<dbReference type="KEGG" id="sml:Smlt1735"/>
<dbReference type="eggNOG" id="COG0324">
    <property type="taxonomic scope" value="Bacteria"/>
</dbReference>
<dbReference type="HOGENOM" id="CLU_032616_0_0_6"/>
<dbReference type="Proteomes" id="UP000008840">
    <property type="component" value="Chromosome"/>
</dbReference>
<dbReference type="GO" id="GO:0005524">
    <property type="term" value="F:ATP binding"/>
    <property type="evidence" value="ECO:0007669"/>
    <property type="project" value="UniProtKB-UniRule"/>
</dbReference>
<dbReference type="GO" id="GO:0052381">
    <property type="term" value="F:tRNA dimethylallyltransferase activity"/>
    <property type="evidence" value="ECO:0007669"/>
    <property type="project" value="UniProtKB-UniRule"/>
</dbReference>
<dbReference type="GO" id="GO:0006400">
    <property type="term" value="P:tRNA modification"/>
    <property type="evidence" value="ECO:0007669"/>
    <property type="project" value="TreeGrafter"/>
</dbReference>
<dbReference type="FunFam" id="1.10.20.140:FF:000001">
    <property type="entry name" value="tRNA dimethylallyltransferase"/>
    <property type="match status" value="1"/>
</dbReference>
<dbReference type="Gene3D" id="1.10.20.140">
    <property type="match status" value="1"/>
</dbReference>
<dbReference type="Gene3D" id="3.40.50.300">
    <property type="entry name" value="P-loop containing nucleotide triphosphate hydrolases"/>
    <property type="match status" value="1"/>
</dbReference>
<dbReference type="HAMAP" id="MF_00185">
    <property type="entry name" value="IPP_trans"/>
    <property type="match status" value="1"/>
</dbReference>
<dbReference type="InterPro" id="IPR039657">
    <property type="entry name" value="Dimethylallyltransferase"/>
</dbReference>
<dbReference type="InterPro" id="IPR018022">
    <property type="entry name" value="IPT"/>
</dbReference>
<dbReference type="InterPro" id="IPR027417">
    <property type="entry name" value="P-loop_NTPase"/>
</dbReference>
<dbReference type="NCBIfam" id="TIGR00174">
    <property type="entry name" value="miaA"/>
    <property type="match status" value="1"/>
</dbReference>
<dbReference type="PANTHER" id="PTHR11088">
    <property type="entry name" value="TRNA DIMETHYLALLYLTRANSFERASE"/>
    <property type="match status" value="1"/>
</dbReference>
<dbReference type="PANTHER" id="PTHR11088:SF60">
    <property type="entry name" value="TRNA DIMETHYLALLYLTRANSFERASE"/>
    <property type="match status" value="1"/>
</dbReference>
<dbReference type="Pfam" id="PF01715">
    <property type="entry name" value="IPPT"/>
    <property type="match status" value="1"/>
</dbReference>
<dbReference type="SUPFAM" id="SSF52540">
    <property type="entry name" value="P-loop containing nucleoside triphosphate hydrolases"/>
    <property type="match status" value="2"/>
</dbReference>
<comment type="function">
    <text evidence="1">Catalyzes the transfer of a dimethylallyl group onto the adenine at position 37 in tRNAs that read codons beginning with uridine, leading to the formation of N6-(dimethylallyl)adenosine (i(6)A).</text>
</comment>
<comment type="catalytic activity">
    <reaction evidence="1">
        <text>adenosine(37) in tRNA + dimethylallyl diphosphate = N(6)-dimethylallyladenosine(37) in tRNA + diphosphate</text>
        <dbReference type="Rhea" id="RHEA:26482"/>
        <dbReference type="Rhea" id="RHEA-COMP:10162"/>
        <dbReference type="Rhea" id="RHEA-COMP:10375"/>
        <dbReference type="ChEBI" id="CHEBI:33019"/>
        <dbReference type="ChEBI" id="CHEBI:57623"/>
        <dbReference type="ChEBI" id="CHEBI:74411"/>
        <dbReference type="ChEBI" id="CHEBI:74415"/>
        <dbReference type="EC" id="2.5.1.75"/>
    </reaction>
</comment>
<comment type="cofactor">
    <cofactor evidence="1">
        <name>Mg(2+)</name>
        <dbReference type="ChEBI" id="CHEBI:18420"/>
    </cofactor>
</comment>
<comment type="subunit">
    <text evidence="1">Monomer.</text>
</comment>
<comment type="similarity">
    <text evidence="1">Belongs to the IPP transferase family.</text>
</comment>
<feature type="chain" id="PRO_1000098691" description="tRNA dimethylallyltransferase">
    <location>
        <begin position="1"/>
        <end position="317"/>
    </location>
</feature>
<feature type="region of interest" description="Interaction with substrate tRNA" evidence="1">
    <location>
        <begin position="39"/>
        <end position="42"/>
    </location>
</feature>
<feature type="region of interest" description="Interaction with substrate tRNA" evidence="1">
    <location>
        <begin position="163"/>
        <end position="167"/>
    </location>
</feature>
<feature type="binding site" evidence="1">
    <location>
        <begin position="14"/>
        <end position="21"/>
    </location>
    <ligand>
        <name>ATP</name>
        <dbReference type="ChEBI" id="CHEBI:30616"/>
    </ligand>
</feature>
<feature type="binding site" evidence="1">
    <location>
        <begin position="16"/>
        <end position="21"/>
    </location>
    <ligand>
        <name>substrate</name>
    </ligand>
</feature>
<feature type="site" description="Interaction with substrate tRNA" evidence="1">
    <location>
        <position position="105"/>
    </location>
</feature>
<feature type="site" description="Interaction with substrate tRNA" evidence="1">
    <location>
        <position position="127"/>
    </location>
</feature>
<proteinExistence type="inferred from homology"/>
<keyword id="KW-0067">ATP-binding</keyword>
<keyword id="KW-0460">Magnesium</keyword>
<keyword id="KW-0547">Nucleotide-binding</keyword>
<keyword id="KW-1185">Reference proteome</keyword>
<keyword id="KW-0808">Transferase</keyword>
<keyword id="KW-0819">tRNA processing</keyword>
<name>MIAA_STRMK</name>
<accession>B2FL25</accession>
<sequence>MGIDRRPLAIAVMGPTASGKTATAIALAKQLDGEIVSVDSALVYRHLDIGSAKPDAAERAQAPHHLLDLRDPWQTYSAAEFAADAGRVVADIVARGKTPILAGGTGLYFRALLQGLSPMPEADPVMREALSTEAAERGWAALHAELAKVDPAAAARIHATDPQRIQRALEVYRLTGTPISEWQRRPGVAPLPVRTLKLILAPRDRAVLHQRIEARFDAMLAQGFLDEVRALRAMPEMAAVTAPLDLPAVRAVGYRQAWEYLDGEGDAARFRDKAIFATRQLAKRQLTWLRGELDARWFDPHVDGERLAGAVSTFVAR</sequence>
<gene>
    <name evidence="1" type="primary">miaA</name>
    <name type="ordered locus">Smlt1735</name>
</gene>